<gene>
    <name type="primary">US12</name>
</gene>
<protein>
    <recommendedName>
        <fullName>ICP47 protein</fullName>
    </recommendedName>
    <alternativeName>
        <fullName>Immediate-early protein IE12</fullName>
    </alternativeName>
    <alternativeName>
        <fullName>Immediate-early-5</fullName>
    </alternativeName>
    <alternativeName>
        <fullName>Infected cell protein 47</fullName>
    </alternativeName>
    <alternativeName>
        <fullName>US12 protein</fullName>
    </alternativeName>
    <alternativeName>
        <fullName>Vmw12</fullName>
    </alternativeName>
</protein>
<keyword id="KW-0244">Early protein</keyword>
<keyword id="KW-1035">Host cytoplasm</keyword>
<keyword id="KW-1048">Host nucleus</keyword>
<keyword id="KW-0945">Host-virus interaction</keyword>
<keyword id="KW-1080">Inhibition of host adaptive immune response by virus</keyword>
<keyword id="KW-1107">Inhibition of host TAP by virus</keyword>
<keyword id="KW-1185">Reference proteome</keyword>
<keyword id="KW-0899">Viral immunoevasion</keyword>
<proteinExistence type="evidence at protein level"/>
<accession>P14345</accession>
<accession>P89480</accession>
<organism>
    <name type="scientific">Human herpesvirus 2 (strain HG52)</name>
    <name type="common">HHV-2</name>
    <name type="synonym">Human herpes simplex virus 2</name>
    <dbReference type="NCBI Taxonomy" id="10315"/>
    <lineage>
        <taxon>Viruses</taxon>
        <taxon>Duplodnaviria</taxon>
        <taxon>Heunggongvirae</taxon>
        <taxon>Peploviricota</taxon>
        <taxon>Herviviricetes</taxon>
        <taxon>Herpesvirales</taxon>
        <taxon>Orthoherpesviridae</taxon>
        <taxon>Alphaherpesvirinae</taxon>
        <taxon>Simplexvirus</taxon>
        <taxon>Simplexvirus humanalpha2</taxon>
        <taxon>Human herpesvirus 2</taxon>
    </lineage>
</organism>
<reference key="1">
    <citation type="journal article" date="1997" name="J. Exp. Med.">
        <title>The active site of ICP47, a herpes simplex virus-encoded inhibitor of the major histocompatibility complex (MHC)-encoded peptide transporter associated with antigen processing (TAP), maps to the NH2-terminal 35 residues.</title>
        <authorList>
            <person name="Galocha B."/>
            <person name="Hill A."/>
            <person name="Barnett B.C."/>
            <person name="Dolan A."/>
            <person name="Raimondi A."/>
            <person name="Cook R.F."/>
            <person name="Brunner J."/>
            <person name="McGeoch D.J."/>
            <person name="Ploegh H.L."/>
        </authorList>
    </citation>
    <scope>NUCLEOTIDE SEQUENCE [GENOMIC DNA]</scope>
    <scope>FUNCTION</scope>
    <scope>ACTIVE DOMAIN</scope>
    <scope>INTERACTION WITH HOST TAP1 AND TAP2</scope>
</reference>
<reference key="2">
    <citation type="journal article" date="1998" name="J. Virol.">
        <title>The genome sequence of herpes simplex virus type 2.</title>
        <authorList>
            <person name="Dolan A."/>
            <person name="Jamieson F.E."/>
            <person name="Cunningham C."/>
            <person name="Barnett B.C."/>
            <person name="McGeoch D.J."/>
        </authorList>
    </citation>
    <scope>NUCLEOTIDE SEQUENCE [LARGE SCALE GENOMIC DNA]</scope>
</reference>
<reference key="3">
    <citation type="journal article" date="1984" name="J. Gen. Virol.">
        <title>The junctions between the repetitive and the short unique sequences of the herpes simplex virus genome are determined by the polypeptide-coding regions of two spliced immediate-early mRNAs.</title>
        <authorList>
            <person name="Whitton J.L."/>
            <person name="Clements J.B."/>
        </authorList>
    </citation>
    <scope>NUCLEOTIDE SEQUENCE [GENOMIC DNA] OF 1-58</scope>
</reference>
<reference key="4">
    <citation type="journal article" date="1997" name="J. Mol. Biol.">
        <title>The active domain of the herpes simplex virus protein ICP47: a potent inhibitor of the transporter associated with antigen processing (TAP).</title>
        <authorList>
            <person name="Neumann L."/>
            <person name="Kraas W."/>
            <person name="Uebel S."/>
            <person name="Jung G."/>
            <person name="Tampe R."/>
        </authorList>
    </citation>
    <scope>ACTIVE DOMAIN</scope>
</reference>
<organismHost>
    <name type="scientific">Homo sapiens</name>
    <name type="common">Human</name>
    <dbReference type="NCBI Taxonomy" id="9606"/>
</organismHost>
<evidence type="ECO:0000250" key="1">
    <source>
        <dbReference type="UniProtKB" id="P03170"/>
    </source>
</evidence>
<evidence type="ECO:0000256" key="2">
    <source>
        <dbReference type="SAM" id="MobiDB-lite"/>
    </source>
</evidence>
<evidence type="ECO:0000269" key="3">
    <source>
    </source>
</evidence>
<evidence type="ECO:0000305" key="4"/>
<dbReference type="EMBL" id="Z86099">
    <property type="protein sequence ID" value="CAB06700.1"/>
    <property type="molecule type" value="Genomic_DNA"/>
</dbReference>
<dbReference type="EMBL" id="M29385">
    <property type="protein sequence ID" value="AAA45849.1"/>
    <property type="molecule type" value="Genomic_DNA"/>
</dbReference>
<dbReference type="SMR" id="P14345"/>
<dbReference type="DNASU" id="1487353"/>
<dbReference type="KEGG" id="vg:1487353"/>
<dbReference type="Proteomes" id="UP000001874">
    <property type="component" value="Segment"/>
</dbReference>
<dbReference type="GO" id="GO:0030430">
    <property type="term" value="C:host cell cytoplasm"/>
    <property type="evidence" value="ECO:0007669"/>
    <property type="project" value="UniProtKB-SubCell"/>
</dbReference>
<dbReference type="GO" id="GO:0042025">
    <property type="term" value="C:host cell nucleus"/>
    <property type="evidence" value="ECO:0007669"/>
    <property type="project" value="UniProtKB-SubCell"/>
</dbReference>
<dbReference type="GO" id="GO:0039588">
    <property type="term" value="P:symbiont-mediated suppression of host antigen processing and presentation"/>
    <property type="evidence" value="ECO:0007669"/>
    <property type="project" value="UniProtKB-KW"/>
</dbReference>
<dbReference type="InterPro" id="IPR008026">
    <property type="entry name" value="Herpes_ICP47"/>
</dbReference>
<dbReference type="Pfam" id="PF05363">
    <property type="entry name" value="Herpes_US12"/>
    <property type="match status" value="1"/>
</dbReference>
<sequence length="86" mass="9785">MSWALKTTDMFLDSSRCTHRTYGDVCAEIHKREREDREAARTAVTDPELPLLCPPDVRSDPASRNPTQQTRGCARSNERQDRVLAP</sequence>
<comment type="function">
    <text evidence="1 3">Plays a role in the inhibition of host immune response. Binds specifically to transporters associated with antigen processing (TAP), thereby blocking peptide-binding and translocation by TAP as well as subsequent loading of peptides onto MHC class I molecules. Empty MHC I molecules are retained in the endoplasmic reticulum and ultimately directed to proteasomal degradation. In consequence, infected cells are masked for immune recognition by cytotoxic T-lymphocytes.</text>
</comment>
<comment type="subunit">
    <text evidence="3">Interacts with host TAP1 and TAP2; these interactions inhibit the loading of peptides onto MHC class I molecules.</text>
</comment>
<comment type="subcellular location">
    <subcellularLocation>
        <location evidence="1">Host cytoplasm</location>
    </subcellularLocation>
    <subcellularLocation>
        <location evidence="1">Host nucleus</location>
    </subcellularLocation>
</comment>
<comment type="domain">
    <text evidence="3">The N-terminal active domain blocks peptide binding to and peptide transport by TAP.</text>
</comment>
<comment type="similarity">
    <text evidence="4">Belongs to the herpesviridae US12 family.</text>
</comment>
<feature type="chain" id="PRO_0000115811" description="ICP47 protein">
    <location>
        <begin position="1"/>
        <end position="86"/>
    </location>
</feature>
<feature type="region of interest" description="Active domain" evidence="3">
    <location>
        <begin position="2"/>
        <end position="35"/>
    </location>
</feature>
<feature type="region of interest" description="Disordered" evidence="2">
    <location>
        <begin position="33"/>
        <end position="86"/>
    </location>
</feature>
<feature type="compositionally biased region" description="Polar residues" evidence="2">
    <location>
        <begin position="62"/>
        <end position="71"/>
    </location>
</feature>
<feature type="compositionally biased region" description="Basic and acidic residues" evidence="2">
    <location>
        <begin position="76"/>
        <end position="86"/>
    </location>
</feature>
<feature type="site" description="Binding to TAP1 subunit" evidence="3">
    <location>
        <position position="22"/>
    </location>
</feature>
<feature type="sequence conflict" description="In Ref. 3; AAA45849." evidence="4" ref="3">
    <original>FL</original>
    <variation>PS</variation>
    <location>
        <begin position="11"/>
        <end position="12"/>
    </location>
</feature>
<name>ICP47_HHV2H</name>